<proteinExistence type="inferred from homology"/>
<reference key="1">
    <citation type="journal article" date="1991" name="Plasmid">
        <title>Identification of an Acinetobacter baumannii gene region with sequence and organizational similarity to Tn2670.</title>
        <authorList>
            <person name="Elisha B.G."/>
            <person name="Steyn L.M."/>
        </authorList>
    </citation>
    <scope>NUCLEOTIDE SEQUENCE [GENOMIC DNA]</scope>
    <source>
        <strain>SAK</strain>
        <transposon>Tn2670-like</transposon>
    </source>
</reference>
<gene>
    <name type="primary">cat</name>
</gene>
<protein>
    <recommendedName>
        <fullName>Chloramphenicol acetyltransferase</fullName>
        <shortName>CAT</shortName>
        <ecNumber>2.3.1.28</ecNumber>
    </recommendedName>
</protein>
<accession>P62578</accession>
<accession>P00483</accession>
<feature type="chain" id="PRO_0000165863" description="Chloramphenicol acetyltransferase">
    <location>
        <begin position="1"/>
        <end position="219"/>
    </location>
</feature>
<feature type="active site" description="Proton acceptor" evidence="1">
    <location>
        <position position="193"/>
    </location>
</feature>
<comment type="function">
    <text>This enzyme is an effector of chloramphenicol resistance in bacteria.</text>
</comment>
<comment type="catalytic activity">
    <reaction evidence="1">
        <text>chloramphenicol + acetyl-CoA = chloramphenicol 3-acetate + CoA</text>
        <dbReference type="Rhea" id="RHEA:18421"/>
        <dbReference type="ChEBI" id="CHEBI:16730"/>
        <dbReference type="ChEBI" id="CHEBI:17698"/>
        <dbReference type="ChEBI" id="CHEBI:57287"/>
        <dbReference type="ChEBI" id="CHEBI:57288"/>
        <dbReference type="EC" id="2.3.1.28"/>
    </reaction>
</comment>
<comment type="similarity">
    <text evidence="2">Belongs to the chloramphenicol acetyltransferase family.</text>
</comment>
<keyword id="KW-0012">Acyltransferase</keyword>
<keyword id="KW-0046">Antibiotic resistance</keyword>
<keyword id="KW-0808">Transferase</keyword>
<keyword id="KW-0814">Transposable element</keyword>
<evidence type="ECO:0000255" key="1">
    <source>
        <dbReference type="PROSITE-ProRule" id="PRU10021"/>
    </source>
</evidence>
<evidence type="ECO:0000305" key="2"/>
<organism>
    <name type="scientific">Acinetobacter calcoaceticus subsp. anitratus</name>
    <dbReference type="NCBI Taxonomy" id="107673"/>
    <lineage>
        <taxon>Bacteria</taxon>
        <taxon>Pseudomonadati</taxon>
        <taxon>Pseudomonadota</taxon>
        <taxon>Gammaproteobacteria</taxon>
        <taxon>Moraxellales</taxon>
        <taxon>Moraxellaceae</taxon>
        <taxon>Acinetobacter</taxon>
        <taxon>Acinetobacter calcoaceticus/baumannii complex</taxon>
    </lineage>
</organism>
<name>CAT_ACIAN</name>
<dbReference type="EC" id="2.3.1.28"/>
<dbReference type="EMBL" id="M37690">
    <property type="protein sequence ID" value="AAA62571.1"/>
    <property type="molecule type" value="Genomic_DNA"/>
</dbReference>
<dbReference type="SMR" id="P62578"/>
<dbReference type="GO" id="GO:0008811">
    <property type="term" value="F:chloramphenicol O-acetyltransferase activity"/>
    <property type="evidence" value="ECO:0007669"/>
    <property type="project" value="UniProtKB-EC"/>
</dbReference>
<dbReference type="GO" id="GO:0046677">
    <property type="term" value="P:response to antibiotic"/>
    <property type="evidence" value="ECO:0007669"/>
    <property type="project" value="UniProtKB-KW"/>
</dbReference>
<dbReference type="Gene3D" id="3.30.559.10">
    <property type="entry name" value="Chloramphenicol acetyltransferase-like domain"/>
    <property type="match status" value="1"/>
</dbReference>
<dbReference type="InterPro" id="IPR023213">
    <property type="entry name" value="CAT-like_dom_sf"/>
</dbReference>
<dbReference type="InterPro" id="IPR018372">
    <property type="entry name" value="Chloramphenicol_AcTrfase_AS"/>
</dbReference>
<dbReference type="InterPro" id="IPR001707">
    <property type="entry name" value="Cmp_AcTrfase"/>
</dbReference>
<dbReference type="NCBIfam" id="NF000491">
    <property type="entry name" value="chloram_CatA"/>
    <property type="match status" value="1"/>
</dbReference>
<dbReference type="PANTHER" id="PTHR38474:SF2">
    <property type="entry name" value="CHLORAMPHENICOL ACETYLTRANSFERASE"/>
    <property type="match status" value="1"/>
</dbReference>
<dbReference type="PANTHER" id="PTHR38474">
    <property type="entry name" value="SLR0299 PROTEIN"/>
    <property type="match status" value="1"/>
</dbReference>
<dbReference type="Pfam" id="PF00302">
    <property type="entry name" value="CAT"/>
    <property type="match status" value="1"/>
</dbReference>
<dbReference type="PIRSF" id="PIRSF000440">
    <property type="entry name" value="CAT"/>
    <property type="match status" value="1"/>
</dbReference>
<dbReference type="SMART" id="SM01059">
    <property type="entry name" value="CAT"/>
    <property type="match status" value="1"/>
</dbReference>
<dbReference type="SUPFAM" id="SSF52777">
    <property type="entry name" value="CoA-dependent acyltransferases"/>
    <property type="match status" value="1"/>
</dbReference>
<dbReference type="PROSITE" id="PS00100">
    <property type="entry name" value="CAT"/>
    <property type="match status" value="1"/>
</dbReference>
<sequence>MEKKITGYTTVDISQWHRKEHFEAFQSVAQCTYNQTVQLDITAFLKTVKKNKHKFYPAFIHILARLMNAHPEFRMAMKDGELVIWDSVHPCYTVFHEQTETFSSLWSEYHDDFRQFLHIYSQDVACYGENLAYFPKGFIENMFFVSANPWVSFTSFDLNVANMDNFFAPVFTMGKYYTQGDKVLMPLAIQVHHAVCDGFHVGRMLNELQQYCDEWQGGA</sequence>